<gene>
    <name evidence="1" type="primary">pgi</name>
    <name type="ordered locus">BCG_1000c</name>
</gene>
<name>G6PI_MYCBP</name>
<organism>
    <name type="scientific">Mycobacterium bovis (strain BCG / Pasteur 1173P2)</name>
    <dbReference type="NCBI Taxonomy" id="410289"/>
    <lineage>
        <taxon>Bacteria</taxon>
        <taxon>Bacillati</taxon>
        <taxon>Actinomycetota</taxon>
        <taxon>Actinomycetes</taxon>
        <taxon>Mycobacteriales</taxon>
        <taxon>Mycobacteriaceae</taxon>
        <taxon>Mycobacterium</taxon>
        <taxon>Mycobacterium tuberculosis complex</taxon>
    </lineage>
</organism>
<keyword id="KW-0963">Cytoplasm</keyword>
<keyword id="KW-0312">Gluconeogenesis</keyword>
<keyword id="KW-0324">Glycolysis</keyword>
<keyword id="KW-0413">Isomerase</keyword>
<feature type="chain" id="PRO_1000013988" description="Glucose-6-phosphate isomerase">
    <location>
        <begin position="1"/>
        <end position="553"/>
    </location>
</feature>
<feature type="region of interest" description="Disordered" evidence="2">
    <location>
        <begin position="524"/>
        <end position="553"/>
    </location>
</feature>
<feature type="compositionally biased region" description="Basic and acidic residues" evidence="2">
    <location>
        <begin position="541"/>
        <end position="553"/>
    </location>
</feature>
<feature type="active site" description="Proton donor" evidence="1">
    <location>
        <position position="357"/>
    </location>
</feature>
<feature type="active site" evidence="1">
    <location>
        <position position="388"/>
    </location>
</feature>
<feature type="active site" evidence="1">
    <location>
        <position position="514"/>
    </location>
</feature>
<accession>A1KH80</accession>
<proteinExistence type="inferred from homology"/>
<dbReference type="EC" id="5.3.1.9" evidence="1"/>
<dbReference type="EMBL" id="AM408590">
    <property type="protein sequence ID" value="CAL70986.1"/>
    <property type="molecule type" value="Genomic_DNA"/>
</dbReference>
<dbReference type="RefSeq" id="WP_003404830.1">
    <property type="nucleotide sequence ID" value="NC_008769.1"/>
</dbReference>
<dbReference type="SMR" id="A1KH80"/>
<dbReference type="GeneID" id="45424915"/>
<dbReference type="KEGG" id="mbb:BCG_1000c"/>
<dbReference type="HOGENOM" id="CLU_017947_3_1_11"/>
<dbReference type="UniPathway" id="UPA00109">
    <property type="reaction ID" value="UER00181"/>
</dbReference>
<dbReference type="UniPathway" id="UPA00138"/>
<dbReference type="Proteomes" id="UP000001472">
    <property type="component" value="Chromosome"/>
</dbReference>
<dbReference type="GO" id="GO:0005829">
    <property type="term" value="C:cytosol"/>
    <property type="evidence" value="ECO:0007669"/>
    <property type="project" value="TreeGrafter"/>
</dbReference>
<dbReference type="GO" id="GO:0097367">
    <property type="term" value="F:carbohydrate derivative binding"/>
    <property type="evidence" value="ECO:0007669"/>
    <property type="project" value="InterPro"/>
</dbReference>
<dbReference type="GO" id="GO:0004347">
    <property type="term" value="F:glucose-6-phosphate isomerase activity"/>
    <property type="evidence" value="ECO:0007669"/>
    <property type="project" value="UniProtKB-UniRule"/>
</dbReference>
<dbReference type="GO" id="GO:0048029">
    <property type="term" value="F:monosaccharide binding"/>
    <property type="evidence" value="ECO:0007669"/>
    <property type="project" value="TreeGrafter"/>
</dbReference>
<dbReference type="GO" id="GO:0006094">
    <property type="term" value="P:gluconeogenesis"/>
    <property type="evidence" value="ECO:0007669"/>
    <property type="project" value="UniProtKB-UniRule"/>
</dbReference>
<dbReference type="GO" id="GO:0051156">
    <property type="term" value="P:glucose 6-phosphate metabolic process"/>
    <property type="evidence" value="ECO:0007669"/>
    <property type="project" value="TreeGrafter"/>
</dbReference>
<dbReference type="GO" id="GO:0006096">
    <property type="term" value="P:glycolytic process"/>
    <property type="evidence" value="ECO:0007669"/>
    <property type="project" value="UniProtKB-UniRule"/>
</dbReference>
<dbReference type="CDD" id="cd05015">
    <property type="entry name" value="SIS_PGI_1"/>
    <property type="match status" value="1"/>
</dbReference>
<dbReference type="CDD" id="cd05016">
    <property type="entry name" value="SIS_PGI_2"/>
    <property type="match status" value="1"/>
</dbReference>
<dbReference type="FunFam" id="3.40.50.10490:FF:000018">
    <property type="entry name" value="Glucose-6-phosphate isomerase"/>
    <property type="match status" value="1"/>
</dbReference>
<dbReference type="Gene3D" id="1.10.1390.10">
    <property type="match status" value="1"/>
</dbReference>
<dbReference type="Gene3D" id="3.40.50.10490">
    <property type="entry name" value="Glucose-6-phosphate isomerase like protein, domain 1"/>
    <property type="match status" value="2"/>
</dbReference>
<dbReference type="HAMAP" id="MF_00473">
    <property type="entry name" value="G6P_isomerase"/>
    <property type="match status" value="1"/>
</dbReference>
<dbReference type="InterPro" id="IPR001672">
    <property type="entry name" value="G6P_Isomerase"/>
</dbReference>
<dbReference type="InterPro" id="IPR023096">
    <property type="entry name" value="G6P_Isomerase_C"/>
</dbReference>
<dbReference type="InterPro" id="IPR018189">
    <property type="entry name" value="Phosphoglucose_isomerase_CS"/>
</dbReference>
<dbReference type="InterPro" id="IPR046348">
    <property type="entry name" value="SIS_dom_sf"/>
</dbReference>
<dbReference type="InterPro" id="IPR035476">
    <property type="entry name" value="SIS_PGI_1"/>
</dbReference>
<dbReference type="InterPro" id="IPR035482">
    <property type="entry name" value="SIS_PGI_2"/>
</dbReference>
<dbReference type="NCBIfam" id="NF001211">
    <property type="entry name" value="PRK00179.1"/>
    <property type="match status" value="1"/>
</dbReference>
<dbReference type="PANTHER" id="PTHR11469">
    <property type="entry name" value="GLUCOSE-6-PHOSPHATE ISOMERASE"/>
    <property type="match status" value="1"/>
</dbReference>
<dbReference type="PANTHER" id="PTHR11469:SF1">
    <property type="entry name" value="GLUCOSE-6-PHOSPHATE ISOMERASE"/>
    <property type="match status" value="1"/>
</dbReference>
<dbReference type="Pfam" id="PF00342">
    <property type="entry name" value="PGI"/>
    <property type="match status" value="1"/>
</dbReference>
<dbReference type="PRINTS" id="PR00662">
    <property type="entry name" value="G6PISOMERASE"/>
</dbReference>
<dbReference type="SUPFAM" id="SSF53697">
    <property type="entry name" value="SIS domain"/>
    <property type="match status" value="1"/>
</dbReference>
<dbReference type="PROSITE" id="PS00765">
    <property type="entry name" value="P_GLUCOSE_ISOMERASE_1"/>
    <property type="match status" value="1"/>
</dbReference>
<dbReference type="PROSITE" id="PS00174">
    <property type="entry name" value="P_GLUCOSE_ISOMERASE_2"/>
    <property type="match status" value="1"/>
</dbReference>
<dbReference type="PROSITE" id="PS51463">
    <property type="entry name" value="P_GLUCOSE_ISOMERASE_3"/>
    <property type="match status" value="1"/>
</dbReference>
<comment type="function">
    <text evidence="1">Catalyzes the reversible isomerization of glucose-6-phosphate to fructose-6-phosphate.</text>
</comment>
<comment type="catalytic activity">
    <reaction evidence="1">
        <text>alpha-D-glucose 6-phosphate = beta-D-fructose 6-phosphate</text>
        <dbReference type="Rhea" id="RHEA:11816"/>
        <dbReference type="ChEBI" id="CHEBI:57634"/>
        <dbReference type="ChEBI" id="CHEBI:58225"/>
        <dbReference type="EC" id="5.3.1.9"/>
    </reaction>
</comment>
<comment type="pathway">
    <text evidence="1">Carbohydrate biosynthesis; gluconeogenesis.</text>
</comment>
<comment type="pathway">
    <text evidence="1">Carbohydrate degradation; glycolysis; D-glyceraldehyde 3-phosphate and glycerone phosphate from D-glucose: step 2/4.</text>
</comment>
<comment type="subcellular location">
    <subcellularLocation>
        <location evidence="1">Cytoplasm</location>
    </subcellularLocation>
</comment>
<comment type="similarity">
    <text evidence="1">Belongs to the GPI family.</text>
</comment>
<reference key="1">
    <citation type="journal article" date="2007" name="Proc. Natl. Acad. Sci. U.S.A.">
        <title>Genome plasticity of BCG and impact on vaccine efficacy.</title>
        <authorList>
            <person name="Brosch R."/>
            <person name="Gordon S.V."/>
            <person name="Garnier T."/>
            <person name="Eiglmeier K."/>
            <person name="Frigui W."/>
            <person name="Valenti P."/>
            <person name="Dos Santos S."/>
            <person name="Duthoy S."/>
            <person name="Lacroix C."/>
            <person name="Garcia-Pelayo C."/>
            <person name="Inwald J.K."/>
            <person name="Golby P."/>
            <person name="Garcia J.N."/>
            <person name="Hewinson R.G."/>
            <person name="Behr M.A."/>
            <person name="Quail M.A."/>
            <person name="Churcher C."/>
            <person name="Barrell B.G."/>
            <person name="Parkhill J."/>
            <person name="Cole S.T."/>
        </authorList>
    </citation>
    <scope>NUCLEOTIDE SEQUENCE [LARGE SCALE GENOMIC DNA]</scope>
    <source>
        <strain>BCG / Pasteur 1173P2</strain>
    </source>
</reference>
<sequence>MTSAPIPDITATPAWDALRRHHDQIGNTHLRQFFADDPGRGRELTVSVGDLYIDYSKHRVTRETLALLIDLARTAHLEERRDQMFAGVHINTSEDRAVLHTALRLPRDAELVVDGQDVVTDVHAVLDAMGAFTDRLRSGEWTGATGKRISTVVNIGIGGSDLGPVMVYQALRHYADAGISARFVSNVDPADLIATLADLDPATTLFIVASKTFSTLETLTNATAARRWLTDALGDAAVSRHFVAVSTNKRLVDDFGINTDNMFGFWDWVGGRYSVDSAIGLSLMTVIGRDAFADFLAGFHIIDRHFATAPLESNAPVLLGLIGLWYSNFFGAQSRTVLPYSNDLSRFPAYLQQLTMESNGKSTRADGSPVSADTGEIFWGEPGTNGQHAFYQLLHQGTRLVPADFIGFAQPLDDLPTAEGTGSMHDLLMSNFFAQTQVLAFGKTAEEIAADGTPAHVVAHKVMPGNRPSTSILASRLTPSVLGQLIALYEHQVFTEGVVWGIDSFDQWGVELGKTQAKALLPVITGAGSPPPQSDSSTDGLVRRYRTERGRAG</sequence>
<evidence type="ECO:0000255" key="1">
    <source>
        <dbReference type="HAMAP-Rule" id="MF_00473"/>
    </source>
</evidence>
<evidence type="ECO:0000256" key="2">
    <source>
        <dbReference type="SAM" id="MobiDB-lite"/>
    </source>
</evidence>
<protein>
    <recommendedName>
        <fullName evidence="1">Glucose-6-phosphate isomerase</fullName>
        <shortName evidence="1">GPI</shortName>
        <ecNumber evidence="1">5.3.1.9</ecNumber>
    </recommendedName>
    <alternativeName>
        <fullName evidence="1">Phosphoglucose isomerase</fullName>
        <shortName evidence="1">PGI</shortName>
    </alternativeName>
    <alternativeName>
        <fullName evidence="1">Phosphohexose isomerase</fullName>
        <shortName evidence="1">PHI</shortName>
    </alternativeName>
</protein>